<proteinExistence type="inferred from homology"/>
<protein>
    <recommendedName>
        <fullName evidence="1">FMN-dependent NADH:quinone oxidoreductase</fullName>
        <ecNumber evidence="1">1.6.5.-</ecNumber>
    </recommendedName>
    <alternativeName>
        <fullName evidence="1">Azo-dye reductase</fullName>
    </alternativeName>
    <alternativeName>
        <fullName evidence="1">FMN-dependent NADH-azo compound oxidoreductase</fullName>
    </alternativeName>
    <alternativeName>
        <fullName evidence="1">FMN-dependent NADH-azoreductase</fullName>
        <ecNumber evidence="1">1.7.1.17</ecNumber>
    </alternativeName>
</protein>
<accession>Q8XQG9</accession>
<dbReference type="EC" id="1.6.5.-" evidence="1"/>
<dbReference type="EC" id="1.7.1.17" evidence="1"/>
<dbReference type="EMBL" id="AL646053">
    <property type="protein sequence ID" value="CAD18409.1"/>
    <property type="molecule type" value="Genomic_DNA"/>
</dbReference>
<dbReference type="RefSeq" id="WP_011004540.1">
    <property type="nucleotide sequence ID" value="NC_003296.1"/>
</dbReference>
<dbReference type="SMR" id="Q8XQG9"/>
<dbReference type="STRING" id="267608.RSp1258"/>
<dbReference type="EnsemblBacteria" id="CAD18409">
    <property type="protein sequence ID" value="CAD18409"/>
    <property type="gene ID" value="RSp1258"/>
</dbReference>
<dbReference type="KEGG" id="rso:RSp1258"/>
<dbReference type="eggNOG" id="COG1182">
    <property type="taxonomic scope" value="Bacteria"/>
</dbReference>
<dbReference type="HOGENOM" id="CLU_088964_0_0_4"/>
<dbReference type="Proteomes" id="UP000001436">
    <property type="component" value="Plasmid megaplasmid Rsp"/>
</dbReference>
<dbReference type="GO" id="GO:0009055">
    <property type="term" value="F:electron transfer activity"/>
    <property type="evidence" value="ECO:0007669"/>
    <property type="project" value="UniProtKB-UniRule"/>
</dbReference>
<dbReference type="GO" id="GO:0010181">
    <property type="term" value="F:FMN binding"/>
    <property type="evidence" value="ECO:0007669"/>
    <property type="project" value="UniProtKB-UniRule"/>
</dbReference>
<dbReference type="GO" id="GO:0016652">
    <property type="term" value="F:oxidoreductase activity, acting on NAD(P)H as acceptor"/>
    <property type="evidence" value="ECO:0007669"/>
    <property type="project" value="UniProtKB-UniRule"/>
</dbReference>
<dbReference type="GO" id="GO:0016655">
    <property type="term" value="F:oxidoreductase activity, acting on NAD(P)H, quinone or similar compound as acceptor"/>
    <property type="evidence" value="ECO:0007669"/>
    <property type="project" value="InterPro"/>
</dbReference>
<dbReference type="Gene3D" id="3.40.50.360">
    <property type="match status" value="1"/>
</dbReference>
<dbReference type="HAMAP" id="MF_01216">
    <property type="entry name" value="Azoreductase_type1"/>
    <property type="match status" value="1"/>
</dbReference>
<dbReference type="InterPro" id="IPR003680">
    <property type="entry name" value="Flavodoxin_fold"/>
</dbReference>
<dbReference type="InterPro" id="IPR029039">
    <property type="entry name" value="Flavoprotein-like_sf"/>
</dbReference>
<dbReference type="InterPro" id="IPR050104">
    <property type="entry name" value="FMN-dep_NADH:Q_OxRdtase_AzoR1"/>
</dbReference>
<dbReference type="InterPro" id="IPR023048">
    <property type="entry name" value="NADH:quinone_OxRdtase_FMN_depd"/>
</dbReference>
<dbReference type="PANTHER" id="PTHR43741">
    <property type="entry name" value="FMN-DEPENDENT NADH-AZOREDUCTASE 1"/>
    <property type="match status" value="1"/>
</dbReference>
<dbReference type="PANTHER" id="PTHR43741:SF4">
    <property type="entry name" value="FMN-DEPENDENT NADH:QUINONE OXIDOREDUCTASE"/>
    <property type="match status" value="1"/>
</dbReference>
<dbReference type="Pfam" id="PF02525">
    <property type="entry name" value="Flavodoxin_2"/>
    <property type="match status" value="1"/>
</dbReference>
<dbReference type="SUPFAM" id="SSF52218">
    <property type="entry name" value="Flavoproteins"/>
    <property type="match status" value="1"/>
</dbReference>
<feature type="chain" id="PRO_0000166350" description="FMN-dependent NADH:quinone oxidoreductase">
    <location>
        <begin position="1"/>
        <end position="208"/>
    </location>
</feature>
<feature type="binding site" evidence="1">
    <location>
        <position position="9"/>
    </location>
    <ligand>
        <name>FMN</name>
        <dbReference type="ChEBI" id="CHEBI:58210"/>
    </ligand>
</feature>
<feature type="binding site" evidence="1">
    <location>
        <begin position="15"/>
        <end position="17"/>
    </location>
    <ligand>
        <name>FMN</name>
        <dbReference type="ChEBI" id="CHEBI:58210"/>
    </ligand>
</feature>
<feature type="binding site" evidence="1">
    <location>
        <begin position="96"/>
        <end position="99"/>
    </location>
    <ligand>
        <name>FMN</name>
        <dbReference type="ChEBI" id="CHEBI:58210"/>
    </ligand>
</feature>
<feature type="binding site" evidence="1">
    <location>
        <begin position="140"/>
        <end position="143"/>
    </location>
    <ligand>
        <name>FMN</name>
        <dbReference type="ChEBI" id="CHEBI:58210"/>
    </ligand>
</feature>
<organism>
    <name type="scientific">Ralstonia nicotianae (strain ATCC BAA-1114 / GMI1000)</name>
    <name type="common">Ralstonia solanacearum</name>
    <dbReference type="NCBI Taxonomy" id="267608"/>
    <lineage>
        <taxon>Bacteria</taxon>
        <taxon>Pseudomonadati</taxon>
        <taxon>Pseudomonadota</taxon>
        <taxon>Betaproteobacteria</taxon>
        <taxon>Burkholderiales</taxon>
        <taxon>Burkholderiaceae</taxon>
        <taxon>Ralstonia</taxon>
        <taxon>Ralstonia solanacearum species complex</taxon>
    </lineage>
</organism>
<keyword id="KW-0285">Flavoprotein</keyword>
<keyword id="KW-0288">FMN</keyword>
<keyword id="KW-0520">NAD</keyword>
<keyword id="KW-0560">Oxidoreductase</keyword>
<keyword id="KW-0614">Plasmid</keyword>
<keyword id="KW-1185">Reference proteome</keyword>
<evidence type="ECO:0000255" key="1">
    <source>
        <dbReference type="HAMAP-Rule" id="MF_01216"/>
    </source>
</evidence>
<sequence>MQVLHLDSSILGDASASRILTAAIVDELRRDNPGATVIHRDLAVEAIPHLDGAIAAGFRATGADGFDAVTLAEHARSEALVGELLASDVIVVGAPMYNFSVPSQLKAWIDRVAQAGRTFKYTETGPVGLTGGKKVIVASTRGGMYSAGPTAAMDFQEAYLKTVFGFLGITDVQFVRAERLAMGPDARAQALEAAHAAMHDVVNQAIAA</sequence>
<geneLocation type="plasmid">
    <name>megaplasmid Rsp</name>
</geneLocation>
<name>AZOR_RALN1</name>
<gene>
    <name evidence="1" type="primary">azoR</name>
    <name type="ordered locus">RSp1258</name>
    <name type="ORF">RS05303</name>
</gene>
<comment type="function">
    <text evidence="1">Quinone reductase that provides resistance to thiol-specific stress caused by electrophilic quinones.</text>
</comment>
<comment type="function">
    <text evidence="1">Also exhibits azoreductase activity. Catalyzes the reductive cleavage of the azo bond in aromatic azo compounds to the corresponding amines.</text>
</comment>
<comment type="catalytic activity">
    <reaction evidence="1">
        <text>2 a quinone + NADH + H(+) = 2 a 1,4-benzosemiquinone + NAD(+)</text>
        <dbReference type="Rhea" id="RHEA:65952"/>
        <dbReference type="ChEBI" id="CHEBI:15378"/>
        <dbReference type="ChEBI" id="CHEBI:57540"/>
        <dbReference type="ChEBI" id="CHEBI:57945"/>
        <dbReference type="ChEBI" id="CHEBI:132124"/>
        <dbReference type="ChEBI" id="CHEBI:134225"/>
    </reaction>
</comment>
<comment type="catalytic activity">
    <reaction evidence="1">
        <text>N,N-dimethyl-1,4-phenylenediamine + anthranilate + 2 NAD(+) = 2-(4-dimethylaminophenyl)diazenylbenzoate + 2 NADH + 2 H(+)</text>
        <dbReference type="Rhea" id="RHEA:55872"/>
        <dbReference type="ChEBI" id="CHEBI:15378"/>
        <dbReference type="ChEBI" id="CHEBI:15783"/>
        <dbReference type="ChEBI" id="CHEBI:16567"/>
        <dbReference type="ChEBI" id="CHEBI:57540"/>
        <dbReference type="ChEBI" id="CHEBI:57945"/>
        <dbReference type="ChEBI" id="CHEBI:71579"/>
        <dbReference type="EC" id="1.7.1.17"/>
    </reaction>
</comment>
<comment type="cofactor">
    <cofactor evidence="1">
        <name>FMN</name>
        <dbReference type="ChEBI" id="CHEBI:58210"/>
    </cofactor>
    <text evidence="1">Binds 1 FMN per subunit.</text>
</comment>
<comment type="subunit">
    <text evidence="1">Homodimer.</text>
</comment>
<comment type="similarity">
    <text evidence="1">Belongs to the azoreductase type 1 family.</text>
</comment>
<reference key="1">
    <citation type="journal article" date="2002" name="Nature">
        <title>Genome sequence of the plant pathogen Ralstonia solanacearum.</title>
        <authorList>
            <person name="Salanoubat M."/>
            <person name="Genin S."/>
            <person name="Artiguenave F."/>
            <person name="Gouzy J."/>
            <person name="Mangenot S."/>
            <person name="Arlat M."/>
            <person name="Billault A."/>
            <person name="Brottier P."/>
            <person name="Camus J.-C."/>
            <person name="Cattolico L."/>
            <person name="Chandler M."/>
            <person name="Choisne N."/>
            <person name="Claudel-Renard C."/>
            <person name="Cunnac S."/>
            <person name="Demange N."/>
            <person name="Gaspin C."/>
            <person name="Lavie M."/>
            <person name="Moisan A."/>
            <person name="Robert C."/>
            <person name="Saurin W."/>
            <person name="Schiex T."/>
            <person name="Siguier P."/>
            <person name="Thebault P."/>
            <person name="Whalen M."/>
            <person name="Wincker P."/>
            <person name="Levy M."/>
            <person name="Weissenbach J."/>
            <person name="Boucher C.A."/>
        </authorList>
    </citation>
    <scope>NUCLEOTIDE SEQUENCE [LARGE SCALE GENOMIC DNA]</scope>
    <source>
        <strain>ATCC BAA-1114 / GMI1000</strain>
    </source>
</reference>